<reference key="1">
    <citation type="journal article" date="2004" name="Proc. Natl. Acad. Sci. U.S.A.">
        <title>Complete genomes of two clinical Staphylococcus aureus strains: evidence for the rapid evolution of virulence and drug resistance.</title>
        <authorList>
            <person name="Holden M.T.G."/>
            <person name="Feil E.J."/>
            <person name="Lindsay J.A."/>
            <person name="Peacock S.J."/>
            <person name="Day N.P.J."/>
            <person name="Enright M.C."/>
            <person name="Foster T.J."/>
            <person name="Moore C.E."/>
            <person name="Hurst L."/>
            <person name="Atkin R."/>
            <person name="Barron A."/>
            <person name="Bason N."/>
            <person name="Bentley S.D."/>
            <person name="Chillingworth C."/>
            <person name="Chillingworth T."/>
            <person name="Churcher C."/>
            <person name="Clark L."/>
            <person name="Corton C."/>
            <person name="Cronin A."/>
            <person name="Doggett J."/>
            <person name="Dowd L."/>
            <person name="Feltwell T."/>
            <person name="Hance Z."/>
            <person name="Harris B."/>
            <person name="Hauser H."/>
            <person name="Holroyd S."/>
            <person name="Jagels K."/>
            <person name="James K.D."/>
            <person name="Lennard N."/>
            <person name="Line A."/>
            <person name="Mayes R."/>
            <person name="Moule S."/>
            <person name="Mungall K."/>
            <person name="Ormond D."/>
            <person name="Quail M.A."/>
            <person name="Rabbinowitsch E."/>
            <person name="Rutherford K.M."/>
            <person name="Sanders M."/>
            <person name="Sharp S."/>
            <person name="Simmonds M."/>
            <person name="Stevens K."/>
            <person name="Whitehead S."/>
            <person name="Barrell B.G."/>
            <person name="Spratt B.G."/>
            <person name="Parkhill J."/>
        </authorList>
    </citation>
    <scope>NUCLEOTIDE SEQUENCE [LARGE SCALE GENOMIC DNA]</scope>
    <source>
        <strain>MRSA252</strain>
    </source>
</reference>
<proteinExistence type="inferred from homology"/>
<dbReference type="EC" id="3.5.2.3" evidence="1"/>
<dbReference type="EMBL" id="BX571856">
    <property type="protein sequence ID" value="CAG40179.1"/>
    <property type="molecule type" value="Genomic_DNA"/>
</dbReference>
<dbReference type="RefSeq" id="WP_000767018.1">
    <property type="nucleotide sequence ID" value="NC_002952.2"/>
</dbReference>
<dbReference type="SMR" id="Q6GHN4"/>
<dbReference type="KEGG" id="sar:SAR1177"/>
<dbReference type="HOGENOM" id="CLU_015572_1_0_9"/>
<dbReference type="UniPathway" id="UPA00070">
    <property type="reaction ID" value="UER00117"/>
</dbReference>
<dbReference type="Proteomes" id="UP000000596">
    <property type="component" value="Chromosome"/>
</dbReference>
<dbReference type="GO" id="GO:0005737">
    <property type="term" value="C:cytoplasm"/>
    <property type="evidence" value="ECO:0007669"/>
    <property type="project" value="TreeGrafter"/>
</dbReference>
<dbReference type="GO" id="GO:0004038">
    <property type="term" value="F:allantoinase activity"/>
    <property type="evidence" value="ECO:0007669"/>
    <property type="project" value="TreeGrafter"/>
</dbReference>
<dbReference type="GO" id="GO:0004151">
    <property type="term" value="F:dihydroorotase activity"/>
    <property type="evidence" value="ECO:0007669"/>
    <property type="project" value="UniProtKB-UniRule"/>
</dbReference>
<dbReference type="GO" id="GO:0008270">
    <property type="term" value="F:zinc ion binding"/>
    <property type="evidence" value="ECO:0007669"/>
    <property type="project" value="UniProtKB-UniRule"/>
</dbReference>
<dbReference type="GO" id="GO:0044205">
    <property type="term" value="P:'de novo' UMP biosynthetic process"/>
    <property type="evidence" value="ECO:0007669"/>
    <property type="project" value="UniProtKB-UniRule"/>
</dbReference>
<dbReference type="GO" id="GO:0006145">
    <property type="term" value="P:purine nucleobase catabolic process"/>
    <property type="evidence" value="ECO:0007669"/>
    <property type="project" value="TreeGrafter"/>
</dbReference>
<dbReference type="CDD" id="cd01317">
    <property type="entry name" value="DHOase_IIa"/>
    <property type="match status" value="1"/>
</dbReference>
<dbReference type="Gene3D" id="3.20.20.140">
    <property type="entry name" value="Metal-dependent hydrolases"/>
    <property type="match status" value="1"/>
</dbReference>
<dbReference type="Gene3D" id="2.30.40.10">
    <property type="entry name" value="Urease, subunit C, domain 1"/>
    <property type="match status" value="2"/>
</dbReference>
<dbReference type="HAMAP" id="MF_00220_B">
    <property type="entry name" value="PyrC_classI_B"/>
    <property type="match status" value="1"/>
</dbReference>
<dbReference type="InterPro" id="IPR006680">
    <property type="entry name" value="Amidohydro-rel"/>
</dbReference>
<dbReference type="InterPro" id="IPR004722">
    <property type="entry name" value="DHOase"/>
</dbReference>
<dbReference type="InterPro" id="IPR050138">
    <property type="entry name" value="DHOase/Allantoinase_Hydrolase"/>
</dbReference>
<dbReference type="InterPro" id="IPR002195">
    <property type="entry name" value="Dihydroorotase_CS"/>
</dbReference>
<dbReference type="InterPro" id="IPR011059">
    <property type="entry name" value="Metal-dep_hydrolase_composite"/>
</dbReference>
<dbReference type="InterPro" id="IPR032466">
    <property type="entry name" value="Metal_Hydrolase"/>
</dbReference>
<dbReference type="NCBIfam" id="NF006837">
    <property type="entry name" value="PRK09357.1-2"/>
    <property type="match status" value="1"/>
</dbReference>
<dbReference type="NCBIfam" id="TIGR00857">
    <property type="entry name" value="pyrC_multi"/>
    <property type="match status" value="1"/>
</dbReference>
<dbReference type="PANTHER" id="PTHR43668">
    <property type="entry name" value="ALLANTOINASE"/>
    <property type="match status" value="1"/>
</dbReference>
<dbReference type="PANTHER" id="PTHR43668:SF2">
    <property type="entry name" value="ALLANTOINASE"/>
    <property type="match status" value="1"/>
</dbReference>
<dbReference type="Pfam" id="PF01979">
    <property type="entry name" value="Amidohydro_1"/>
    <property type="match status" value="1"/>
</dbReference>
<dbReference type="SUPFAM" id="SSF51338">
    <property type="entry name" value="Composite domain of metallo-dependent hydrolases"/>
    <property type="match status" value="1"/>
</dbReference>
<dbReference type="SUPFAM" id="SSF51556">
    <property type="entry name" value="Metallo-dependent hydrolases"/>
    <property type="match status" value="1"/>
</dbReference>
<dbReference type="PROSITE" id="PS00482">
    <property type="entry name" value="DIHYDROOROTASE_1"/>
    <property type="match status" value="1"/>
</dbReference>
<dbReference type="PROSITE" id="PS00483">
    <property type="entry name" value="DIHYDROOROTASE_2"/>
    <property type="match status" value="1"/>
</dbReference>
<evidence type="ECO:0000255" key="1">
    <source>
        <dbReference type="HAMAP-Rule" id="MF_00220"/>
    </source>
</evidence>
<accession>Q6GHN4</accession>
<comment type="function">
    <text evidence="1">Catalyzes the reversible cyclization of carbamoyl aspartate to dihydroorotate.</text>
</comment>
<comment type="catalytic activity">
    <reaction evidence="1">
        <text>(S)-dihydroorotate + H2O = N-carbamoyl-L-aspartate + H(+)</text>
        <dbReference type="Rhea" id="RHEA:24296"/>
        <dbReference type="ChEBI" id="CHEBI:15377"/>
        <dbReference type="ChEBI" id="CHEBI:15378"/>
        <dbReference type="ChEBI" id="CHEBI:30864"/>
        <dbReference type="ChEBI" id="CHEBI:32814"/>
        <dbReference type="EC" id="3.5.2.3"/>
    </reaction>
</comment>
<comment type="cofactor">
    <cofactor evidence="1">
        <name>Zn(2+)</name>
        <dbReference type="ChEBI" id="CHEBI:29105"/>
    </cofactor>
    <text evidence="1">Binds 2 Zn(2+) ions per subunit.</text>
</comment>
<comment type="pathway">
    <text evidence="1">Pyrimidine metabolism; UMP biosynthesis via de novo pathway; (S)-dihydroorotate from bicarbonate: step 3/3.</text>
</comment>
<comment type="similarity">
    <text evidence="1">Belongs to the metallo-dependent hydrolases superfamily. DHOase family. Class I DHOase subfamily.</text>
</comment>
<protein>
    <recommendedName>
        <fullName evidence="1">Dihydroorotase</fullName>
        <shortName evidence="1">DHOase</shortName>
        <ecNumber evidence="1">3.5.2.3</ecNumber>
    </recommendedName>
</protein>
<gene>
    <name evidence="1" type="primary">pyrC</name>
    <name type="ordered locus">SAR1177</name>
</gene>
<feature type="chain" id="PRO_0000147249" description="Dihydroorotase">
    <location>
        <begin position="1"/>
        <end position="424"/>
    </location>
</feature>
<feature type="active site" evidence="1">
    <location>
        <position position="303"/>
    </location>
</feature>
<feature type="binding site" evidence="1">
    <location>
        <position position="58"/>
    </location>
    <ligand>
        <name>Zn(2+)</name>
        <dbReference type="ChEBI" id="CHEBI:29105"/>
        <label>1</label>
    </ligand>
</feature>
<feature type="binding site" evidence="1">
    <location>
        <begin position="60"/>
        <end position="62"/>
    </location>
    <ligand>
        <name>substrate</name>
    </ligand>
</feature>
<feature type="binding site" evidence="1">
    <location>
        <position position="60"/>
    </location>
    <ligand>
        <name>Zn(2+)</name>
        <dbReference type="ChEBI" id="CHEBI:29105"/>
        <label>1</label>
    </ligand>
</feature>
<feature type="binding site" evidence="1">
    <location>
        <position position="92"/>
    </location>
    <ligand>
        <name>substrate</name>
    </ligand>
</feature>
<feature type="binding site" evidence="1">
    <location>
        <position position="150"/>
    </location>
    <ligand>
        <name>Zn(2+)</name>
        <dbReference type="ChEBI" id="CHEBI:29105"/>
        <label>1</label>
    </ligand>
</feature>
<feature type="binding site" evidence="1">
    <location>
        <position position="150"/>
    </location>
    <ligand>
        <name>Zn(2+)</name>
        <dbReference type="ChEBI" id="CHEBI:29105"/>
        <label>2</label>
    </ligand>
</feature>
<feature type="binding site" evidence="1">
    <location>
        <position position="177"/>
    </location>
    <ligand>
        <name>Zn(2+)</name>
        <dbReference type="ChEBI" id="CHEBI:29105"/>
        <label>2</label>
    </ligand>
</feature>
<feature type="binding site" evidence="1">
    <location>
        <position position="230"/>
    </location>
    <ligand>
        <name>Zn(2+)</name>
        <dbReference type="ChEBI" id="CHEBI:29105"/>
        <label>2</label>
    </ligand>
</feature>
<feature type="binding site" evidence="1">
    <location>
        <position position="276"/>
    </location>
    <ligand>
        <name>substrate</name>
    </ligand>
</feature>
<feature type="binding site" evidence="1">
    <location>
        <position position="303"/>
    </location>
    <ligand>
        <name>Zn(2+)</name>
        <dbReference type="ChEBI" id="CHEBI:29105"/>
        <label>1</label>
    </ligand>
</feature>
<feature type="binding site" evidence="1">
    <location>
        <position position="307"/>
    </location>
    <ligand>
        <name>substrate</name>
    </ligand>
</feature>
<feature type="binding site" evidence="1">
    <location>
        <begin position="321"/>
        <end position="322"/>
    </location>
    <ligand>
        <name>substrate</name>
    </ligand>
</feature>
<keyword id="KW-0378">Hydrolase</keyword>
<keyword id="KW-0479">Metal-binding</keyword>
<keyword id="KW-0665">Pyrimidine biosynthesis</keyword>
<keyword id="KW-0862">Zinc</keyword>
<organism>
    <name type="scientific">Staphylococcus aureus (strain MRSA252)</name>
    <dbReference type="NCBI Taxonomy" id="282458"/>
    <lineage>
        <taxon>Bacteria</taxon>
        <taxon>Bacillati</taxon>
        <taxon>Bacillota</taxon>
        <taxon>Bacilli</taxon>
        <taxon>Bacillales</taxon>
        <taxon>Staphylococcaceae</taxon>
        <taxon>Staphylococcus</taxon>
    </lineage>
</organism>
<name>PYRC_STAAR</name>
<sequence>MKLIKNGKVLQNGELQQADILIDGKVIKQIAPAIEPSNGIDIIDAKGHFVSPGFVDVHVHLREPGGEYKETIETGTKAAARGGFTTVCPMPNTRPVPDSVEHFEALQKLIDDNAQVRVLPYASITTRQLGKELVDFPALVKEGAFAFTDDGVGVQTASMMYEGMIEAAKVNKAIVAHCEDNSLIYGGAMHEGKRSKELGIPGIPNICESVQIARDVLLAEAAGCHYHVCHVSTKESVRVIRDAKRAGIHVTAEVTPHHLLLTEDDIPGNNAIYKMNPPLRSTEDREALLEGLLDGTIDCIATDHAPHARDEKAQPMEKAPFGIVGSETAFPLLYTHFVKNGDWTLQQLVDYLTIKPCETFNLEYGTLKENGYADLTIIDLDSEQEIKGEDFLSKADNTPFIGYKVYGNPILTMVEGEVKFEGDK</sequence>